<evidence type="ECO:0000250" key="1">
    <source>
        <dbReference type="UniProtKB" id="P42765"/>
    </source>
</evidence>
<evidence type="ECO:0000250" key="2">
    <source>
        <dbReference type="UniProtKB" id="Q9BWD1"/>
    </source>
</evidence>
<evidence type="ECO:0000255" key="3">
    <source>
        <dbReference type="PROSITE-ProRule" id="PRU10020"/>
    </source>
</evidence>
<evidence type="ECO:0000305" key="4"/>
<sequence>MNAGSDPVVIISAARTAIGSFNGALSTVPVHNLGTTVIKEVLQRAKVAPEEVSEVIFGHVLTAGCGQNPTRQASVGAGIPYSVPAWSCQMICGSGLKAVCLAAQSIAMGDSTIVVAGGMENMSKAPHLAHLRSGVKMGEVPLADSILCDGLTDAFHNYHMGITAENVAKKWQVSREAQDKVAVVSQNRAEHAQKAGHFDKEIVPVHVSSRKGLTEVKIDEFPRHGSNLEAMSKLKPYFLTDGTGTVTPANASGMNDGAAAVVLMKKTEAESRMLKPLAQVVSWSQAGVEPSVMGVGPIPAIKQAVAKAGWSLEDVDVFEINEAFAAVSAAIAKELGLSPEKVNIDGGAIALGHPLGASGCRILVTLLHTLERVGGTRGVAALCIGGGMGIAMCVQRG</sequence>
<organism>
    <name type="scientific">Rattus norvegicus</name>
    <name type="common">Rat</name>
    <dbReference type="NCBI Taxonomy" id="10116"/>
    <lineage>
        <taxon>Eukaryota</taxon>
        <taxon>Metazoa</taxon>
        <taxon>Chordata</taxon>
        <taxon>Craniata</taxon>
        <taxon>Vertebrata</taxon>
        <taxon>Euteleostomi</taxon>
        <taxon>Mammalia</taxon>
        <taxon>Eutheria</taxon>
        <taxon>Euarchontoglires</taxon>
        <taxon>Glires</taxon>
        <taxon>Rodentia</taxon>
        <taxon>Myomorpha</taxon>
        <taxon>Muroidea</taxon>
        <taxon>Muridae</taxon>
        <taxon>Murinae</taxon>
        <taxon>Rattus</taxon>
    </lineage>
</organism>
<accession>Q5XI22</accession>
<name>THIC_RAT</name>
<comment type="function">
    <text evidence="2">Involved in the biosynthetic pathway of cholesterol.</text>
</comment>
<comment type="catalytic activity">
    <reaction evidence="3">
        <text>2 acetyl-CoA = acetoacetyl-CoA + CoA</text>
        <dbReference type="Rhea" id="RHEA:21036"/>
        <dbReference type="ChEBI" id="CHEBI:57286"/>
        <dbReference type="ChEBI" id="CHEBI:57287"/>
        <dbReference type="ChEBI" id="CHEBI:57288"/>
        <dbReference type="EC" id="2.3.1.9"/>
    </reaction>
    <physiologicalReaction direction="right-to-left" evidence="2">
        <dbReference type="Rhea" id="RHEA:21038"/>
    </physiologicalReaction>
</comment>
<comment type="pathway">
    <text evidence="2">Lipid metabolism; fatty acid metabolism.</text>
</comment>
<comment type="subunit">
    <text evidence="2">Homotetramer.</text>
</comment>
<comment type="subcellular location">
    <subcellularLocation>
        <location evidence="2">Cytoplasm</location>
        <location evidence="2">Cytosol</location>
    </subcellularLocation>
</comment>
<comment type="similarity">
    <text evidence="4">Belongs to the thiolase-like superfamily. Thiolase family.</text>
</comment>
<reference key="1">
    <citation type="journal article" date="2004" name="Genome Res.">
        <title>The status, quality, and expansion of the NIH full-length cDNA project: the Mammalian Gene Collection (MGC).</title>
        <authorList>
            <consortium name="The MGC Project Team"/>
        </authorList>
    </citation>
    <scope>NUCLEOTIDE SEQUENCE [LARGE SCALE MRNA]</scope>
    <source>
        <tissue>Kidney</tissue>
    </source>
</reference>
<reference key="2">
    <citation type="submission" date="2007-04" db="UniProtKB">
        <authorList>
            <person name="Lubec G."/>
            <person name="Afjehi-Sadat L."/>
            <person name="Chen W.-Q."/>
        </authorList>
    </citation>
    <scope>PROTEIN SEQUENCE OF 16-39; 195-210; 218-223 AND 342-372</scope>
    <scope>IDENTIFICATION BY MASS SPECTROMETRY</scope>
    <source>
        <strain>Sprague-Dawley</strain>
        <tissue>Hippocampus</tissue>
        <tissue>Spinal cord</tissue>
    </source>
</reference>
<protein>
    <recommendedName>
        <fullName>Acetyl-CoA acetyltransferase, cytosolic</fullName>
        <ecNumber evidence="3">2.3.1.9</ecNumber>
    </recommendedName>
    <alternativeName>
        <fullName>Cytosolic acetoacetyl-CoA thiolase</fullName>
    </alternativeName>
</protein>
<feature type="chain" id="PRO_0000271366" description="Acetyl-CoA acetyltransferase, cytosolic">
    <location>
        <begin position="1"/>
        <end position="397"/>
    </location>
</feature>
<feature type="active site" description="Acyl-thioester intermediate" evidence="2">
    <location>
        <position position="92"/>
    </location>
</feature>
<feature type="active site" description="Proton donor/acceptor" evidence="2">
    <location>
        <position position="383"/>
    </location>
</feature>
<feature type="binding site" evidence="2">
    <location>
        <position position="223"/>
    </location>
    <ligand>
        <name>CoA</name>
        <dbReference type="ChEBI" id="CHEBI:57287"/>
    </ligand>
</feature>
<feature type="binding site" evidence="2">
    <location>
        <position position="226"/>
    </location>
    <ligand>
        <name>CoA</name>
        <dbReference type="ChEBI" id="CHEBI:57287"/>
    </ligand>
</feature>
<feature type="binding site" evidence="2">
    <location>
        <position position="252"/>
    </location>
    <ligand>
        <name>CoA</name>
        <dbReference type="ChEBI" id="CHEBI:57287"/>
    </ligand>
</feature>
<feature type="site" description="Increases nucleophilicity of active site Cys" evidence="1">
    <location>
        <position position="353"/>
    </location>
</feature>
<feature type="modified residue" description="N-acetylmethionine" evidence="2">
    <location>
        <position position="1"/>
    </location>
</feature>
<feature type="modified residue" description="N6-acetyllysine" evidence="2">
    <location>
        <position position="200"/>
    </location>
</feature>
<feature type="modified residue" description="N6-acetyllysine" evidence="2">
    <location>
        <position position="233"/>
    </location>
</feature>
<feature type="modified residue" description="N6-acetyllysine" evidence="2">
    <location>
        <position position="235"/>
    </location>
</feature>
<proteinExistence type="evidence at protein level"/>
<gene>
    <name type="primary">Acat2</name>
</gene>
<dbReference type="EC" id="2.3.1.9" evidence="3"/>
<dbReference type="EMBL" id="BC083872">
    <property type="protein sequence ID" value="AAH83872.1"/>
    <property type="molecule type" value="mRNA"/>
</dbReference>
<dbReference type="RefSeq" id="NP_001006996.1">
    <property type="nucleotide sequence ID" value="NM_001006995.1"/>
</dbReference>
<dbReference type="SMR" id="Q5XI22"/>
<dbReference type="FunCoup" id="Q5XI22">
    <property type="interactions" value="920"/>
</dbReference>
<dbReference type="STRING" id="10116.ENSRNOP00000068312"/>
<dbReference type="GlyGen" id="Q5XI22">
    <property type="glycosylation" value="1 site"/>
</dbReference>
<dbReference type="iPTMnet" id="Q5XI22"/>
<dbReference type="PhosphoSitePlus" id="Q5XI22"/>
<dbReference type="jPOST" id="Q5XI22"/>
<dbReference type="PaxDb" id="10116-ENSRNOP00000059561"/>
<dbReference type="Ensembl" id="ENSRNOT00000114086.1">
    <property type="protein sequence ID" value="ENSRNOP00000083545.1"/>
    <property type="gene ID" value="ENSRNOG00000019189.8"/>
</dbReference>
<dbReference type="GeneID" id="308100"/>
<dbReference type="KEGG" id="rno:308100"/>
<dbReference type="AGR" id="RGD:1359366"/>
<dbReference type="CTD" id="39"/>
<dbReference type="RGD" id="1359366">
    <property type="gene designation" value="Acat2"/>
</dbReference>
<dbReference type="eggNOG" id="KOG1390">
    <property type="taxonomic scope" value="Eukaryota"/>
</dbReference>
<dbReference type="GeneTree" id="ENSGT01030000234626"/>
<dbReference type="InParanoid" id="Q5XI22"/>
<dbReference type="OMA" id="ICPSIAI"/>
<dbReference type="OrthoDB" id="5404651at2759"/>
<dbReference type="Reactome" id="R-RNO-191273">
    <property type="pathway name" value="Cholesterol biosynthesis"/>
</dbReference>
<dbReference type="SABIO-RK" id="Q5XI22"/>
<dbReference type="UniPathway" id="UPA00199"/>
<dbReference type="PRO" id="PR:Q5XI22"/>
<dbReference type="Proteomes" id="UP000002494">
    <property type="component" value="Chromosome 1"/>
</dbReference>
<dbReference type="GO" id="GO:0005737">
    <property type="term" value="C:cytoplasm"/>
    <property type="evidence" value="ECO:0000266"/>
    <property type="project" value="RGD"/>
</dbReference>
<dbReference type="GO" id="GO:0005829">
    <property type="term" value="C:cytosol"/>
    <property type="evidence" value="ECO:0007669"/>
    <property type="project" value="UniProtKB-SubCell"/>
</dbReference>
<dbReference type="GO" id="GO:0005777">
    <property type="term" value="C:peroxisome"/>
    <property type="evidence" value="ECO:0000304"/>
    <property type="project" value="UniProtKB"/>
</dbReference>
<dbReference type="GO" id="GO:0003985">
    <property type="term" value="F:acetyl-CoA C-acetyltransferase activity"/>
    <property type="evidence" value="ECO:0000314"/>
    <property type="project" value="RGD"/>
</dbReference>
<dbReference type="GO" id="GO:0071398">
    <property type="term" value="P:cellular response to fatty acid"/>
    <property type="evidence" value="ECO:0000270"/>
    <property type="project" value="RGD"/>
</dbReference>
<dbReference type="GO" id="GO:0031670">
    <property type="term" value="P:cellular response to nutrient"/>
    <property type="evidence" value="ECO:0000270"/>
    <property type="project" value="RGD"/>
</dbReference>
<dbReference type="GO" id="GO:0006695">
    <property type="term" value="P:cholesterol biosynthetic process"/>
    <property type="evidence" value="ECO:0000304"/>
    <property type="project" value="UniProtKB"/>
</dbReference>
<dbReference type="GO" id="GO:0019408">
    <property type="term" value="P:dolichol biosynthetic process"/>
    <property type="evidence" value="ECO:0000304"/>
    <property type="project" value="UniProtKB"/>
</dbReference>
<dbReference type="GO" id="GO:0006631">
    <property type="term" value="P:fatty acid metabolic process"/>
    <property type="evidence" value="ECO:0007669"/>
    <property type="project" value="UniProtKB-UniPathway"/>
</dbReference>
<dbReference type="GO" id="GO:0046952">
    <property type="term" value="P:ketone body catabolic process"/>
    <property type="evidence" value="ECO:0000270"/>
    <property type="project" value="RGD"/>
</dbReference>
<dbReference type="GO" id="GO:0001889">
    <property type="term" value="P:liver development"/>
    <property type="evidence" value="ECO:0000270"/>
    <property type="project" value="RGD"/>
</dbReference>
<dbReference type="GO" id="GO:0045797">
    <property type="term" value="P:positive regulation of intestinal cholesterol absorption"/>
    <property type="evidence" value="ECO:0000266"/>
    <property type="project" value="RGD"/>
</dbReference>
<dbReference type="CDD" id="cd00751">
    <property type="entry name" value="thiolase"/>
    <property type="match status" value="1"/>
</dbReference>
<dbReference type="FunFam" id="3.40.47.10:FF:000010">
    <property type="entry name" value="Acetyl-CoA acetyltransferase (Thiolase)"/>
    <property type="match status" value="1"/>
</dbReference>
<dbReference type="Gene3D" id="3.40.47.10">
    <property type="match status" value="2"/>
</dbReference>
<dbReference type="InterPro" id="IPR002155">
    <property type="entry name" value="Thiolase"/>
</dbReference>
<dbReference type="InterPro" id="IPR016039">
    <property type="entry name" value="Thiolase-like"/>
</dbReference>
<dbReference type="InterPro" id="IPR020610">
    <property type="entry name" value="Thiolase_AS"/>
</dbReference>
<dbReference type="InterPro" id="IPR020617">
    <property type="entry name" value="Thiolase_C"/>
</dbReference>
<dbReference type="InterPro" id="IPR020613">
    <property type="entry name" value="Thiolase_CS"/>
</dbReference>
<dbReference type="InterPro" id="IPR020616">
    <property type="entry name" value="Thiolase_N"/>
</dbReference>
<dbReference type="NCBIfam" id="TIGR01930">
    <property type="entry name" value="AcCoA-C-Actrans"/>
    <property type="match status" value="1"/>
</dbReference>
<dbReference type="PANTHER" id="PTHR18919:SF107">
    <property type="entry name" value="ACETYL-COA ACETYLTRANSFERASE, CYTOSOLIC"/>
    <property type="match status" value="1"/>
</dbReference>
<dbReference type="PANTHER" id="PTHR18919">
    <property type="entry name" value="ACETYL-COA C-ACYLTRANSFERASE"/>
    <property type="match status" value="1"/>
</dbReference>
<dbReference type="Pfam" id="PF02803">
    <property type="entry name" value="Thiolase_C"/>
    <property type="match status" value="1"/>
</dbReference>
<dbReference type="Pfam" id="PF00108">
    <property type="entry name" value="Thiolase_N"/>
    <property type="match status" value="1"/>
</dbReference>
<dbReference type="PIRSF" id="PIRSF000429">
    <property type="entry name" value="Ac-CoA_Ac_transf"/>
    <property type="match status" value="1"/>
</dbReference>
<dbReference type="SUPFAM" id="SSF53901">
    <property type="entry name" value="Thiolase-like"/>
    <property type="match status" value="2"/>
</dbReference>
<dbReference type="PROSITE" id="PS00737">
    <property type="entry name" value="THIOLASE_2"/>
    <property type="match status" value="1"/>
</dbReference>
<dbReference type="PROSITE" id="PS00099">
    <property type="entry name" value="THIOLASE_3"/>
    <property type="match status" value="1"/>
</dbReference>
<keyword id="KW-0007">Acetylation</keyword>
<keyword id="KW-0012">Acyltransferase</keyword>
<keyword id="KW-0963">Cytoplasm</keyword>
<keyword id="KW-0903">Direct protein sequencing</keyword>
<keyword id="KW-1185">Reference proteome</keyword>
<keyword id="KW-0808">Transferase</keyword>